<organism>
    <name type="scientific">Histophilus somni (strain 2336)</name>
    <name type="common">Haemophilus somnus</name>
    <dbReference type="NCBI Taxonomy" id="228400"/>
    <lineage>
        <taxon>Bacteria</taxon>
        <taxon>Pseudomonadati</taxon>
        <taxon>Pseudomonadota</taxon>
        <taxon>Gammaproteobacteria</taxon>
        <taxon>Pasteurellales</taxon>
        <taxon>Pasteurellaceae</taxon>
        <taxon>Histophilus</taxon>
    </lineage>
</organism>
<sequence>MNLNATLIGQLIAFAIFVWFCMKYVWPPIIKAIEERQRSIANALASAEAAKKEQSDTKVLVEQEINQARIKAQEIVDLANKRRNEILEEVKIEAEALREKIIEQGHAEIESERKRVQEELRIKVASLAIAGAEKIVGRNIDEAANNDIIDKLVADL</sequence>
<reference key="1">
    <citation type="submission" date="2008-02" db="EMBL/GenBank/DDBJ databases">
        <title>Complete sequence of Haemophilus somnus 2336.</title>
        <authorList>
            <consortium name="US DOE Joint Genome Institute"/>
            <person name="Siddaramappa S."/>
            <person name="Duncan A.J."/>
            <person name="Challacombe J.F."/>
            <person name="Rainey D."/>
            <person name="Gillaspy A.F."/>
            <person name="Carson M."/>
            <person name="Gipson J."/>
            <person name="Gipson M."/>
            <person name="Bruce D."/>
            <person name="Detter J.C."/>
            <person name="Han C.S."/>
            <person name="Land M."/>
            <person name="Tapia R."/>
            <person name="Thompson L.S."/>
            <person name="Orvis J."/>
            <person name="Zaitshik J."/>
            <person name="Barnes G."/>
            <person name="Brettin T.S."/>
            <person name="Dyer D.W."/>
            <person name="Inzana T.J."/>
        </authorList>
    </citation>
    <scope>NUCLEOTIDE SEQUENCE [LARGE SCALE GENOMIC DNA]</scope>
    <source>
        <strain>2336</strain>
    </source>
</reference>
<name>ATPF_HISS2</name>
<evidence type="ECO:0000255" key="1">
    <source>
        <dbReference type="HAMAP-Rule" id="MF_01398"/>
    </source>
</evidence>
<accession>B0UWG9</accession>
<protein>
    <recommendedName>
        <fullName evidence="1">ATP synthase subunit b</fullName>
    </recommendedName>
    <alternativeName>
        <fullName evidence="1">ATP synthase F(0) sector subunit b</fullName>
    </alternativeName>
    <alternativeName>
        <fullName evidence="1">ATPase subunit I</fullName>
    </alternativeName>
    <alternativeName>
        <fullName evidence="1">F-type ATPase subunit b</fullName>
        <shortName evidence="1">F-ATPase subunit b</shortName>
    </alternativeName>
</protein>
<comment type="function">
    <text evidence="1">F(1)F(0) ATP synthase produces ATP from ADP in the presence of a proton or sodium gradient. F-type ATPases consist of two structural domains, F(1) containing the extramembraneous catalytic core and F(0) containing the membrane proton channel, linked together by a central stalk and a peripheral stalk. During catalysis, ATP synthesis in the catalytic domain of F(1) is coupled via a rotary mechanism of the central stalk subunits to proton translocation.</text>
</comment>
<comment type="function">
    <text evidence="1">Component of the F(0) channel, it forms part of the peripheral stalk, linking F(1) to F(0).</text>
</comment>
<comment type="subunit">
    <text evidence="1">F-type ATPases have 2 components, F(1) - the catalytic core - and F(0) - the membrane proton channel. F(1) has five subunits: alpha(3), beta(3), gamma(1), delta(1), epsilon(1). F(0) has three main subunits: a(1), b(2) and c(10-14). The alpha and beta chains form an alternating ring which encloses part of the gamma chain. F(1) is attached to F(0) by a central stalk formed by the gamma and epsilon chains, while a peripheral stalk is formed by the delta and b chains.</text>
</comment>
<comment type="subcellular location">
    <subcellularLocation>
        <location evidence="1">Cell inner membrane</location>
        <topology evidence="1">Single-pass membrane protein</topology>
    </subcellularLocation>
</comment>
<comment type="similarity">
    <text evidence="1">Belongs to the ATPase B chain family.</text>
</comment>
<gene>
    <name evidence="1" type="primary">atpF</name>
    <name type="ordered locus">HSM_1854</name>
</gene>
<keyword id="KW-0066">ATP synthesis</keyword>
<keyword id="KW-0997">Cell inner membrane</keyword>
<keyword id="KW-1003">Cell membrane</keyword>
<keyword id="KW-0138">CF(0)</keyword>
<keyword id="KW-0375">Hydrogen ion transport</keyword>
<keyword id="KW-0406">Ion transport</keyword>
<keyword id="KW-0472">Membrane</keyword>
<keyword id="KW-0812">Transmembrane</keyword>
<keyword id="KW-1133">Transmembrane helix</keyword>
<keyword id="KW-0813">Transport</keyword>
<feature type="chain" id="PRO_0000368516" description="ATP synthase subunit b">
    <location>
        <begin position="1"/>
        <end position="156"/>
    </location>
</feature>
<feature type="transmembrane region" description="Helical" evidence="1">
    <location>
        <begin position="7"/>
        <end position="27"/>
    </location>
</feature>
<proteinExistence type="inferred from homology"/>
<dbReference type="EMBL" id="CP000947">
    <property type="protein sequence ID" value="ACA31643.1"/>
    <property type="molecule type" value="Genomic_DNA"/>
</dbReference>
<dbReference type="RefSeq" id="WP_011609844.1">
    <property type="nucleotide sequence ID" value="NC_010519.1"/>
</dbReference>
<dbReference type="SMR" id="B0UWG9"/>
<dbReference type="STRING" id="228400.HSM_1854"/>
<dbReference type="GeneID" id="31488161"/>
<dbReference type="KEGG" id="hsm:HSM_1854"/>
<dbReference type="HOGENOM" id="CLU_079215_4_5_6"/>
<dbReference type="GO" id="GO:0005886">
    <property type="term" value="C:plasma membrane"/>
    <property type="evidence" value="ECO:0007669"/>
    <property type="project" value="UniProtKB-SubCell"/>
</dbReference>
<dbReference type="GO" id="GO:0045259">
    <property type="term" value="C:proton-transporting ATP synthase complex"/>
    <property type="evidence" value="ECO:0007669"/>
    <property type="project" value="UniProtKB-KW"/>
</dbReference>
<dbReference type="GO" id="GO:0046933">
    <property type="term" value="F:proton-transporting ATP synthase activity, rotational mechanism"/>
    <property type="evidence" value="ECO:0007669"/>
    <property type="project" value="UniProtKB-UniRule"/>
</dbReference>
<dbReference type="GO" id="GO:0046961">
    <property type="term" value="F:proton-transporting ATPase activity, rotational mechanism"/>
    <property type="evidence" value="ECO:0007669"/>
    <property type="project" value="TreeGrafter"/>
</dbReference>
<dbReference type="CDD" id="cd06503">
    <property type="entry name" value="ATP-synt_Fo_b"/>
    <property type="match status" value="1"/>
</dbReference>
<dbReference type="FunFam" id="1.20.5.620:FF:000001">
    <property type="entry name" value="ATP synthase subunit b"/>
    <property type="match status" value="1"/>
</dbReference>
<dbReference type="Gene3D" id="1.20.5.620">
    <property type="entry name" value="F1F0 ATP synthase subunit B, membrane domain"/>
    <property type="match status" value="1"/>
</dbReference>
<dbReference type="HAMAP" id="MF_01398">
    <property type="entry name" value="ATP_synth_b_bprime"/>
    <property type="match status" value="1"/>
</dbReference>
<dbReference type="InterPro" id="IPR028987">
    <property type="entry name" value="ATP_synth_B-like_membr_sf"/>
</dbReference>
<dbReference type="InterPro" id="IPR002146">
    <property type="entry name" value="ATP_synth_b/b'su_bac/chlpt"/>
</dbReference>
<dbReference type="InterPro" id="IPR005864">
    <property type="entry name" value="ATP_synth_F0_bsu_bac"/>
</dbReference>
<dbReference type="InterPro" id="IPR050059">
    <property type="entry name" value="ATP_synthase_B_chain"/>
</dbReference>
<dbReference type="NCBIfam" id="TIGR01144">
    <property type="entry name" value="ATP_synt_b"/>
    <property type="match status" value="1"/>
</dbReference>
<dbReference type="NCBIfam" id="NF004411">
    <property type="entry name" value="PRK05759.1-2"/>
    <property type="match status" value="1"/>
</dbReference>
<dbReference type="NCBIfam" id="NF004413">
    <property type="entry name" value="PRK05759.1-4"/>
    <property type="match status" value="1"/>
</dbReference>
<dbReference type="PANTHER" id="PTHR33445:SF1">
    <property type="entry name" value="ATP SYNTHASE SUBUNIT B"/>
    <property type="match status" value="1"/>
</dbReference>
<dbReference type="PANTHER" id="PTHR33445">
    <property type="entry name" value="ATP SYNTHASE SUBUNIT B', CHLOROPLASTIC"/>
    <property type="match status" value="1"/>
</dbReference>
<dbReference type="Pfam" id="PF00430">
    <property type="entry name" value="ATP-synt_B"/>
    <property type="match status" value="1"/>
</dbReference>
<dbReference type="SUPFAM" id="SSF81573">
    <property type="entry name" value="F1F0 ATP synthase subunit B, membrane domain"/>
    <property type="match status" value="1"/>
</dbReference>